<keyword id="KW-0539">Nucleus</keyword>
<keyword id="KW-1185">Reference proteome</keyword>
<keyword id="KW-0677">Repeat</keyword>
<keyword id="KW-0690">Ribosome biogenesis</keyword>
<keyword id="KW-0698">rRNA processing</keyword>
<comment type="function">
    <text evidence="1">RNA-binding nucleolar protein required for pre-rRNA processing. Involved in production of 18S rRNA and assembly of small ribosomal subunit (By similarity).</text>
</comment>
<comment type="subcellular location">
    <subcellularLocation>
        <location evidence="1">Nucleus</location>
        <location evidence="1">Nucleolus</location>
    </subcellularLocation>
</comment>
<gene>
    <name type="primary">NOP9</name>
    <name type="ORF">PADG_00969</name>
</gene>
<protein>
    <recommendedName>
        <fullName>Nucleolar protein 9</fullName>
    </recommendedName>
    <alternativeName>
        <fullName>Pumilio domain-containing protein NOP9</fullName>
    </alternativeName>
</protein>
<evidence type="ECO:0000250" key="1"/>
<evidence type="ECO:0000256" key="2">
    <source>
        <dbReference type="SAM" id="MobiDB-lite"/>
    </source>
</evidence>
<feature type="chain" id="PRO_0000407822" description="Nucleolar protein 9">
    <location>
        <begin position="1"/>
        <end position="678"/>
    </location>
</feature>
<feature type="repeat" description="Pumilio 1">
    <location>
        <begin position="108"/>
        <end position="143"/>
    </location>
</feature>
<feature type="repeat" description="Pumilio 2">
    <location>
        <begin position="291"/>
        <end position="334"/>
    </location>
</feature>
<feature type="repeat" description="Pumilio 3">
    <location>
        <begin position="382"/>
        <end position="419"/>
    </location>
</feature>
<feature type="repeat" description="Pumilio 4">
    <location>
        <begin position="524"/>
        <end position="562"/>
    </location>
</feature>
<feature type="repeat" description="Pumilio 5">
    <location>
        <begin position="563"/>
        <end position="600"/>
    </location>
</feature>
<feature type="region of interest" description="Disordered" evidence="2">
    <location>
        <begin position="1"/>
        <end position="24"/>
    </location>
</feature>
<feature type="region of interest" description="Disordered" evidence="2">
    <location>
        <begin position="477"/>
        <end position="496"/>
    </location>
</feature>
<feature type="compositionally biased region" description="Basic residues" evidence="2">
    <location>
        <begin position="1"/>
        <end position="15"/>
    </location>
</feature>
<name>NOP9_PARBD</name>
<sequence length="678" mass="75759">MPRDKQKRGRRAEAKRKRDDVITDPTVLKRQKSSDVCNYPNPSYEQLEIRGDYIPLDEEPVDYTGTPFYGLLDIEEQEYFSHASGLLELNQFETEEEKSIFIERVYEEANGKELKIACSQSCSRLMEKLISASTVSQIKRLFSKFIGHFLNLVQHRFASHCCECLFIHAAQHVTSEMKKKSSKEKENLEEDSTSELQLEDLFLKAISELEGNWGYLLTERFASHTIRLLLLVLAGKPLRNSSTTTVIASRKKEYLASKVGTQLDPSISEKRAVPTSFNKALEKMMKDLVAGLDNTYLRALATHPVGNPVLQLLLSVELSHMGKSKAKDPDSLLRRLVPDENLQGDGESANFLKGLFYDPVGSRLLETIVQDAPGKFFRLFYKILVRERIGSFSRNEIAGHVVVRILERLSKDDLKSAMDMILPEVAPLVERSRLTVIKALIERGIVRGVDLGPLAAALLSAYGDDAVSRINNMLKLQRSNQESDGTTSSSNTSSPEQLHGSLLAQAMLKSTGPLSELVQSSLLAVTTETLISIAQDPVVSHVLQDALTLPTSTPQFRRQITSRFSGKIAELALHSSGSHVVDALWPATKDLLFVKQRFAEELVVHERALRDSFVGRAVWRNWSMDLYKRKRGSWIAIAKGLEDSTDINPNALTHKPKSNIDLARARFAAKANGSKAPS</sequence>
<accession>C1FYU3</accession>
<reference key="1">
    <citation type="journal article" date="2011" name="PLoS Genet.">
        <title>Comparative genomic analysis of human fungal pathogens causing paracoccidioidomycosis.</title>
        <authorList>
            <person name="Desjardins C.A."/>
            <person name="Champion M.D."/>
            <person name="Holder J.W."/>
            <person name="Muszewska A."/>
            <person name="Goldberg J."/>
            <person name="Bailao A.M."/>
            <person name="Brigido M.M."/>
            <person name="Ferreira M.E."/>
            <person name="Garcia A.M."/>
            <person name="Grynberg M."/>
            <person name="Gujja S."/>
            <person name="Heiman D.I."/>
            <person name="Henn M.R."/>
            <person name="Kodira C.D."/>
            <person name="Leon-Narvaez H."/>
            <person name="Longo L.V.G."/>
            <person name="Ma L.-J."/>
            <person name="Malavazi I."/>
            <person name="Matsuo A.L."/>
            <person name="Morais F.V."/>
            <person name="Pereira M."/>
            <person name="Rodriguez-Brito S."/>
            <person name="Sakthikumar S."/>
            <person name="Salem-Izacc S.M."/>
            <person name="Sykes S.M."/>
            <person name="Teixeira M.M."/>
            <person name="Vallejo M.C."/>
            <person name="Walter M.E."/>
            <person name="Yandava C."/>
            <person name="Young S."/>
            <person name="Zeng Q."/>
            <person name="Zucker J."/>
            <person name="Felipe M.S."/>
            <person name="Goldman G.H."/>
            <person name="Haas B.J."/>
            <person name="McEwen J.G."/>
            <person name="Nino-Vega G."/>
            <person name="Puccia R."/>
            <person name="San-Blas G."/>
            <person name="Soares C.M."/>
            <person name="Birren B.W."/>
            <person name="Cuomo C.A."/>
        </authorList>
    </citation>
    <scope>NUCLEOTIDE SEQUENCE [LARGE SCALE GENOMIC DNA]</scope>
    <source>
        <strain>Pb18</strain>
    </source>
</reference>
<proteinExistence type="inferred from homology"/>
<dbReference type="EMBL" id="KN275957">
    <property type="protein sequence ID" value="EEH44680.1"/>
    <property type="molecule type" value="Genomic_DNA"/>
</dbReference>
<dbReference type="RefSeq" id="XP_010756559.1">
    <property type="nucleotide sequence ID" value="XM_010758257.1"/>
</dbReference>
<dbReference type="SMR" id="C1FYU3"/>
<dbReference type="FunCoup" id="C1FYU3">
    <property type="interactions" value="858"/>
</dbReference>
<dbReference type="STRING" id="502780.C1FYU3"/>
<dbReference type="GeneID" id="22580727"/>
<dbReference type="KEGG" id="pbn:PADG_00969"/>
<dbReference type="VEuPathDB" id="FungiDB:PADG_00969"/>
<dbReference type="eggNOG" id="KOG2188">
    <property type="taxonomic scope" value="Eukaryota"/>
</dbReference>
<dbReference type="HOGENOM" id="CLU_008720_1_1_1"/>
<dbReference type="InParanoid" id="C1FYU3"/>
<dbReference type="OMA" id="HHLVRNF"/>
<dbReference type="OrthoDB" id="33620at33183"/>
<dbReference type="Proteomes" id="UP000001628">
    <property type="component" value="Unassembled WGS sequence"/>
</dbReference>
<dbReference type="GO" id="GO:0030686">
    <property type="term" value="C:90S preribosome"/>
    <property type="evidence" value="ECO:0007669"/>
    <property type="project" value="TreeGrafter"/>
</dbReference>
<dbReference type="GO" id="GO:0005730">
    <property type="term" value="C:nucleolus"/>
    <property type="evidence" value="ECO:0007669"/>
    <property type="project" value="UniProtKB-SubCell"/>
</dbReference>
<dbReference type="GO" id="GO:0030688">
    <property type="term" value="C:preribosome, small subunit precursor"/>
    <property type="evidence" value="ECO:0007669"/>
    <property type="project" value="TreeGrafter"/>
</dbReference>
<dbReference type="GO" id="GO:0003723">
    <property type="term" value="F:RNA binding"/>
    <property type="evidence" value="ECO:0007669"/>
    <property type="project" value="InterPro"/>
</dbReference>
<dbReference type="GO" id="GO:0000480">
    <property type="term" value="P:endonucleolytic cleavage in 5'-ETS of tricistronic rRNA transcript (SSU-rRNA, 5.8S rRNA, LSU-rRNA)"/>
    <property type="evidence" value="ECO:0007669"/>
    <property type="project" value="TreeGrafter"/>
</dbReference>
<dbReference type="GO" id="GO:0000447">
    <property type="term" value="P:endonucleolytic cleavage in ITS1 to separate SSU-rRNA from 5.8S rRNA and LSU-rRNA from tricistronic rRNA transcript (SSU-rRNA, 5.8S rRNA, LSU-rRNA)"/>
    <property type="evidence" value="ECO:0007669"/>
    <property type="project" value="TreeGrafter"/>
</dbReference>
<dbReference type="GO" id="GO:0000472">
    <property type="term" value="P:endonucleolytic cleavage to generate mature 5'-end of SSU-rRNA from (SSU-rRNA, 5.8S rRNA, LSU-rRNA)"/>
    <property type="evidence" value="ECO:0007669"/>
    <property type="project" value="TreeGrafter"/>
</dbReference>
<dbReference type="GO" id="GO:0000056">
    <property type="term" value="P:ribosomal small subunit export from nucleus"/>
    <property type="evidence" value="ECO:0007669"/>
    <property type="project" value="TreeGrafter"/>
</dbReference>
<dbReference type="Gene3D" id="1.25.10.10">
    <property type="entry name" value="Leucine-rich Repeat Variant"/>
    <property type="match status" value="3"/>
</dbReference>
<dbReference type="InterPro" id="IPR011989">
    <property type="entry name" value="ARM-like"/>
</dbReference>
<dbReference type="InterPro" id="IPR016024">
    <property type="entry name" value="ARM-type_fold"/>
</dbReference>
<dbReference type="InterPro" id="IPR040000">
    <property type="entry name" value="NOP9"/>
</dbReference>
<dbReference type="InterPro" id="IPR001313">
    <property type="entry name" value="Pumilio_RNA-bd_rpt"/>
</dbReference>
<dbReference type="PANTHER" id="PTHR13102">
    <property type="entry name" value="NUCLEOLAR PROTEIN 9"/>
    <property type="match status" value="1"/>
</dbReference>
<dbReference type="PANTHER" id="PTHR13102:SF0">
    <property type="entry name" value="NUCLEOLAR PROTEIN 9"/>
    <property type="match status" value="1"/>
</dbReference>
<dbReference type="Pfam" id="PF22493">
    <property type="entry name" value="PUF_NOP9"/>
    <property type="match status" value="1"/>
</dbReference>
<dbReference type="SMART" id="SM00025">
    <property type="entry name" value="Pumilio"/>
    <property type="match status" value="8"/>
</dbReference>
<dbReference type="SUPFAM" id="SSF48371">
    <property type="entry name" value="ARM repeat"/>
    <property type="match status" value="1"/>
</dbReference>
<organism>
    <name type="scientific">Paracoccidioides brasiliensis (strain Pb18)</name>
    <dbReference type="NCBI Taxonomy" id="502780"/>
    <lineage>
        <taxon>Eukaryota</taxon>
        <taxon>Fungi</taxon>
        <taxon>Dikarya</taxon>
        <taxon>Ascomycota</taxon>
        <taxon>Pezizomycotina</taxon>
        <taxon>Eurotiomycetes</taxon>
        <taxon>Eurotiomycetidae</taxon>
        <taxon>Onygenales</taxon>
        <taxon>Ajellomycetaceae</taxon>
        <taxon>Paracoccidioides</taxon>
    </lineage>
</organism>